<accession>P52225</accession>
<feature type="chain" id="PRO_0000201586" description="Cytochrome c-type biogenesis protein CcmF">
    <location>
        <begin position="1"/>
        <end position="660"/>
    </location>
</feature>
<feature type="transmembrane region" description="Helical" evidence="2">
    <location>
        <begin position="15"/>
        <end position="35"/>
    </location>
</feature>
<feature type="transmembrane region" description="Helical" evidence="2">
    <location>
        <begin position="49"/>
        <end position="69"/>
    </location>
</feature>
<feature type="transmembrane region" description="Helical" evidence="2">
    <location>
        <begin position="99"/>
        <end position="119"/>
    </location>
</feature>
<feature type="transmembrane region" description="Helical" evidence="2">
    <location>
        <begin position="126"/>
        <end position="146"/>
    </location>
</feature>
<feature type="transmembrane region" description="Helical" evidence="2">
    <location>
        <begin position="181"/>
        <end position="201"/>
    </location>
</feature>
<feature type="transmembrane region" description="Helical" evidence="2">
    <location>
        <begin position="216"/>
        <end position="236"/>
    </location>
</feature>
<feature type="transmembrane region" description="Helical" evidence="2">
    <location>
        <begin position="250"/>
        <end position="270"/>
    </location>
</feature>
<feature type="transmembrane region" description="Helical" evidence="2">
    <location>
        <begin position="279"/>
        <end position="299"/>
    </location>
</feature>
<feature type="transmembrane region" description="Helical" evidence="2">
    <location>
        <begin position="318"/>
        <end position="338"/>
    </location>
</feature>
<feature type="transmembrane region" description="Helical" evidence="2">
    <location>
        <begin position="360"/>
        <end position="380"/>
    </location>
</feature>
<feature type="transmembrane region" description="Helical" evidence="2">
    <location>
        <begin position="395"/>
        <end position="415"/>
    </location>
</feature>
<feature type="transmembrane region" description="Helical" evidence="2">
    <location>
        <begin position="426"/>
        <end position="446"/>
    </location>
</feature>
<feature type="transmembrane region" description="Helical" evidence="2">
    <location>
        <begin position="450"/>
        <end position="470"/>
    </location>
</feature>
<feature type="transmembrane region" description="Helical" evidence="2">
    <location>
        <begin position="493"/>
        <end position="513"/>
    </location>
</feature>
<feature type="transmembrane region" description="Helical" evidence="2">
    <location>
        <begin position="618"/>
        <end position="638"/>
    </location>
</feature>
<evidence type="ECO:0000250" key="1"/>
<evidence type="ECO:0000255" key="2"/>
<evidence type="ECO:0000305" key="3"/>
<keyword id="KW-0997">Cell inner membrane</keyword>
<keyword id="KW-1003">Cell membrane</keyword>
<keyword id="KW-0201">Cytochrome c-type biogenesis</keyword>
<keyword id="KW-0472">Membrane</keyword>
<keyword id="KW-0812">Transmembrane</keyword>
<keyword id="KW-1133">Transmembrane helix</keyword>
<organism>
    <name type="scientific">Pseudomonas fluorescens</name>
    <dbReference type="NCBI Taxonomy" id="294"/>
    <lineage>
        <taxon>Bacteria</taxon>
        <taxon>Pseudomonadati</taxon>
        <taxon>Pseudomonadota</taxon>
        <taxon>Gammaproteobacteria</taxon>
        <taxon>Pseudomonadales</taxon>
        <taxon>Pseudomonadaceae</taxon>
        <taxon>Pseudomonas</taxon>
    </lineage>
</organism>
<protein>
    <recommendedName>
        <fullName>Cytochrome c-type biogenesis protein CcmF</fullName>
    </recommendedName>
    <alternativeName>
        <fullName>Cytochrome c-type biogenesis protein CycK</fullName>
    </alternativeName>
</protein>
<reference key="1">
    <citation type="submission" date="1996-01" db="EMBL/GenBank/DDBJ databases">
        <authorList>
            <person name="Yang C.H."/>
            <person name="Azad H.R."/>
            <person name="Cooksey D.A."/>
        </authorList>
    </citation>
    <scope>NUCLEOTIDE SEQUENCE [GENOMIC DNA]</scope>
    <source>
        <strain>09906</strain>
    </source>
</reference>
<name>CCMF_PSEFL</name>
<comment type="function">
    <text evidence="1">Required for the biogenesis of c-type cytochromes. Possible subunit of a heme lyase (By similarity).</text>
</comment>
<comment type="subcellular location">
    <subcellularLocation>
        <location evidence="3">Cell inner membrane</location>
        <topology evidence="3">Multi-pass membrane protein</topology>
    </subcellularLocation>
</comment>
<comment type="similarity">
    <text evidence="3">Belongs to the CcmF/CycK/Ccl1/NrfE/CcsA family.</text>
</comment>
<proteinExistence type="inferred from homology"/>
<dbReference type="EMBL" id="U44827">
    <property type="protein sequence ID" value="AAC44226.1"/>
    <property type="molecule type" value="Genomic_DNA"/>
</dbReference>
<dbReference type="SMR" id="P52225"/>
<dbReference type="eggNOG" id="COG1138">
    <property type="taxonomic scope" value="Bacteria"/>
</dbReference>
<dbReference type="GO" id="GO:0005886">
    <property type="term" value="C:plasma membrane"/>
    <property type="evidence" value="ECO:0007669"/>
    <property type="project" value="UniProtKB-SubCell"/>
</dbReference>
<dbReference type="GO" id="GO:0020037">
    <property type="term" value="F:heme binding"/>
    <property type="evidence" value="ECO:0007669"/>
    <property type="project" value="InterPro"/>
</dbReference>
<dbReference type="GO" id="GO:0015232">
    <property type="term" value="F:heme transmembrane transporter activity"/>
    <property type="evidence" value="ECO:0007669"/>
    <property type="project" value="InterPro"/>
</dbReference>
<dbReference type="GO" id="GO:0017004">
    <property type="term" value="P:cytochrome complex assembly"/>
    <property type="evidence" value="ECO:0007669"/>
    <property type="project" value="UniProtKB-KW"/>
</dbReference>
<dbReference type="InterPro" id="IPR032523">
    <property type="entry name" value="CcmF_C"/>
</dbReference>
<dbReference type="InterPro" id="IPR002541">
    <property type="entry name" value="Cyt_c_assembly"/>
</dbReference>
<dbReference type="InterPro" id="IPR003567">
    <property type="entry name" value="Cyt_c_biogenesis"/>
</dbReference>
<dbReference type="InterPro" id="IPR003568">
    <property type="entry name" value="Cyt_c_biogenesis_CcmF"/>
</dbReference>
<dbReference type="NCBIfam" id="TIGR00353">
    <property type="entry name" value="nrfE"/>
    <property type="match status" value="1"/>
</dbReference>
<dbReference type="NCBIfam" id="NF007691">
    <property type="entry name" value="PRK10369.1"/>
    <property type="match status" value="1"/>
</dbReference>
<dbReference type="PANTHER" id="PTHR43653">
    <property type="entry name" value="CYTOCHROME C ASSEMBLY PROTEIN-RELATED"/>
    <property type="match status" value="1"/>
</dbReference>
<dbReference type="PANTHER" id="PTHR43653:SF1">
    <property type="entry name" value="CYTOCHROME C-TYPE BIOGENESIS PROTEIN CCMF"/>
    <property type="match status" value="1"/>
</dbReference>
<dbReference type="Pfam" id="PF16327">
    <property type="entry name" value="CcmF_C"/>
    <property type="match status" value="1"/>
</dbReference>
<dbReference type="Pfam" id="PF01578">
    <property type="entry name" value="Cytochrom_C_asm"/>
    <property type="match status" value="1"/>
</dbReference>
<dbReference type="PRINTS" id="PR01410">
    <property type="entry name" value="CCBIOGENESIS"/>
</dbReference>
<dbReference type="PRINTS" id="PR01411">
    <property type="entry name" value="CCMFBIOGNSIS"/>
</dbReference>
<sequence>MTSALFIPELGQLRMILALCFAVVQAVVPLLGAWPGDRLWMSLAQPARWGQFAFLLFAFGCLTYAFMTDDFSVAYVANNSNSALPWYYLFSAVWGAHEGSLLLWALILGGWTFAVSVFSRQLPQVMLARVLAVMGMISIGFLLFLIMTSNPFSRMLPQIPADGHDLNPLLQDIGLIVHPPMLYMGYVGFSVAFAFAIAALLGGRLDAAWARWSRPWTIVAWAFLGIGITLGSWWAYYELGWGGWWFWDPVENASFMPWLVGTALIHSLAVTEKRGVFKSWTVLLAIAAFSLTLLAAFLVRSGVLTSVHAFASDPERGVFILIFLLFVVGGSLTLFVRAPVVKSQVGFNLWSRETLLLGNNLVLVVAASMILLGTLYPLVLDALSGAKLSVGPPYFNALFIPLMGLLMVVMAVGVLVRWKDTPVKWLVGMLAPVLLGSVALAVVAGIAYGDFNWAVLATFLLAAWVLLAGVRDIFDKTRHKGLLKGLPTLTRSYWGMQIAHIGIAVCALGVVLSSQNSAERDLRLAPGESMDLAGYHFIFEGAKHFEGPNFTSDKGTVRVVRNGKEIAVLHPEKRLYTVQSSMMTEAGIDAGFTRDLYVALGEPLGDGAWAVRVHVKPFVRWIWFGGLLTGFGGLLAALDRRYRVKVKSRVREALGMGAAV</sequence>
<gene>
    <name type="primary">ccmF</name>
    <name type="synonym">cycK</name>
</gene>